<gene>
    <name type="primary">Phyhipl</name>
</gene>
<organism>
    <name type="scientific">Mus musculus</name>
    <name type="common">Mouse</name>
    <dbReference type="NCBI Taxonomy" id="10090"/>
    <lineage>
        <taxon>Eukaryota</taxon>
        <taxon>Metazoa</taxon>
        <taxon>Chordata</taxon>
        <taxon>Craniata</taxon>
        <taxon>Vertebrata</taxon>
        <taxon>Euteleostomi</taxon>
        <taxon>Mammalia</taxon>
        <taxon>Eutheria</taxon>
        <taxon>Euarchontoglires</taxon>
        <taxon>Glires</taxon>
        <taxon>Rodentia</taxon>
        <taxon>Myomorpha</taxon>
        <taxon>Muroidea</taxon>
        <taxon>Muridae</taxon>
        <taxon>Murinae</taxon>
        <taxon>Mus</taxon>
        <taxon>Mus</taxon>
    </lineage>
</organism>
<comment type="function">
    <text evidence="1">May play a role in the development of the central system.</text>
</comment>
<comment type="alternative products">
    <event type="alternative splicing"/>
    <isoform>
        <id>Q8BGT8-1</id>
        <name>1</name>
        <sequence type="displayed"/>
    </isoform>
    <isoform>
        <id>Q8BGT8-2</id>
        <name>2</name>
        <sequence type="described" ref="VSP_034070"/>
    </isoform>
</comment>
<comment type="similarity">
    <text evidence="5">Belongs to the PHYHIP family.</text>
</comment>
<comment type="sequence caution" evidence="5">
    <conflict type="miscellaneous discrepancy">
        <sequence resource="EMBL-CDS" id="AAI25000"/>
    </conflict>
    <text>Contaminating sequence. Sequence of unknown origin in the N-terminal part.</text>
</comment>
<comment type="sequence caution" evidence="5">
    <conflict type="frameshift">
        <sequence resource="EMBL-CDS" id="BAC28713"/>
    </conflict>
</comment>
<name>PHIPL_MOUSE</name>
<protein>
    <recommendedName>
        <fullName>Phytanoyl-CoA hydroxylase-interacting protein-like</fullName>
    </recommendedName>
</protein>
<keyword id="KW-0025">Alternative splicing</keyword>
<keyword id="KW-0325">Glycoprotein</keyword>
<keyword id="KW-0597">Phosphoprotein</keyword>
<keyword id="KW-1185">Reference proteome</keyword>
<dbReference type="EMBL" id="AK029522">
    <property type="protein sequence ID" value="BAC26493.1"/>
    <property type="molecule type" value="mRNA"/>
</dbReference>
<dbReference type="EMBL" id="AK032166">
    <property type="protein sequence ID" value="BAC27735.1"/>
    <property type="molecule type" value="mRNA"/>
</dbReference>
<dbReference type="EMBL" id="AK034448">
    <property type="protein sequence ID" value="BAC28713.1"/>
    <property type="status" value="ALT_FRAME"/>
    <property type="molecule type" value="mRNA"/>
</dbReference>
<dbReference type="EMBL" id="AK083011">
    <property type="protein sequence ID" value="BAC38729.1"/>
    <property type="molecule type" value="mRNA"/>
</dbReference>
<dbReference type="EMBL" id="BC027081">
    <property type="protein sequence ID" value="AAH27081.1"/>
    <property type="molecule type" value="mRNA"/>
</dbReference>
<dbReference type="EMBL" id="BC037618">
    <property type="protein sequence ID" value="AAH37618.2"/>
    <property type="molecule type" value="mRNA"/>
</dbReference>
<dbReference type="EMBL" id="BC124999">
    <property type="protein sequence ID" value="AAI25000.1"/>
    <property type="status" value="ALT_SEQ"/>
    <property type="molecule type" value="mRNA"/>
</dbReference>
<dbReference type="CCDS" id="CCDS23914.1">
    <molecule id="Q8BGT8-1"/>
</dbReference>
<dbReference type="RefSeq" id="NP_001156318.1">
    <property type="nucleotide sequence ID" value="NM_001162846.1"/>
</dbReference>
<dbReference type="RefSeq" id="NP_848736.2">
    <molecule id="Q8BGT8-1"/>
    <property type="nucleotide sequence ID" value="NM_178621.4"/>
</dbReference>
<dbReference type="SMR" id="Q8BGT8"/>
<dbReference type="BioGRID" id="214338">
    <property type="interactions" value="1"/>
</dbReference>
<dbReference type="FunCoup" id="Q8BGT8">
    <property type="interactions" value="1624"/>
</dbReference>
<dbReference type="IntAct" id="Q8BGT8">
    <property type="interactions" value="1"/>
</dbReference>
<dbReference type="MINT" id="Q8BGT8"/>
<dbReference type="STRING" id="10090.ENSMUSP00000045807"/>
<dbReference type="GlyCosmos" id="Q8BGT8">
    <property type="glycosylation" value="2 sites, No reported glycans"/>
</dbReference>
<dbReference type="GlyGen" id="Q8BGT8">
    <property type="glycosylation" value="3 sites, 1 N-linked glycan (1 site), 1 O-linked glycan (1 site)"/>
</dbReference>
<dbReference type="iPTMnet" id="Q8BGT8"/>
<dbReference type="PhosphoSitePlus" id="Q8BGT8"/>
<dbReference type="SwissPalm" id="Q8BGT8"/>
<dbReference type="jPOST" id="Q8BGT8"/>
<dbReference type="PaxDb" id="10090-ENSMUSP00000045807"/>
<dbReference type="PeptideAtlas" id="Q8BGT8"/>
<dbReference type="ProteomicsDB" id="288199">
    <molecule id="Q8BGT8-1"/>
</dbReference>
<dbReference type="ProteomicsDB" id="288200">
    <molecule id="Q8BGT8-2"/>
</dbReference>
<dbReference type="Antibodypedia" id="45121">
    <property type="antibodies" value="42 antibodies from 16 providers"/>
</dbReference>
<dbReference type="Ensembl" id="ENSMUST00000046513.10">
    <molecule id="Q8BGT8-1"/>
    <property type="protein sequence ID" value="ENSMUSP00000045807.4"/>
    <property type="gene ID" value="ENSMUSG00000037747.10"/>
</dbReference>
<dbReference type="GeneID" id="70911"/>
<dbReference type="KEGG" id="mmu:70911"/>
<dbReference type="UCSC" id="uc007fnz.2">
    <molecule id="Q8BGT8-1"/>
    <property type="organism name" value="mouse"/>
</dbReference>
<dbReference type="UCSC" id="uc007fob.2">
    <molecule id="Q8BGT8-2"/>
    <property type="organism name" value="mouse"/>
</dbReference>
<dbReference type="AGR" id="MGI:1918161"/>
<dbReference type="CTD" id="84457"/>
<dbReference type="MGI" id="MGI:1918161">
    <property type="gene designation" value="Phyhipl"/>
</dbReference>
<dbReference type="VEuPathDB" id="HostDB:ENSMUSG00000037747"/>
<dbReference type="eggNOG" id="ENOG502QQIT">
    <property type="taxonomic scope" value="Eukaryota"/>
</dbReference>
<dbReference type="GeneTree" id="ENSGT00390000014563"/>
<dbReference type="InParanoid" id="Q8BGT8"/>
<dbReference type="OMA" id="QLMSMST"/>
<dbReference type="OrthoDB" id="6101761at2759"/>
<dbReference type="PhylomeDB" id="Q8BGT8"/>
<dbReference type="TreeFam" id="TF314485"/>
<dbReference type="BioGRID-ORCS" id="70911">
    <property type="hits" value="5 hits in 77 CRISPR screens"/>
</dbReference>
<dbReference type="ChiTaRS" id="Phyhipl">
    <property type="organism name" value="mouse"/>
</dbReference>
<dbReference type="PRO" id="PR:Q8BGT8"/>
<dbReference type="Proteomes" id="UP000000589">
    <property type="component" value="Chromosome 10"/>
</dbReference>
<dbReference type="RNAct" id="Q8BGT8">
    <property type="molecule type" value="protein"/>
</dbReference>
<dbReference type="Bgee" id="ENSMUSG00000037747">
    <property type="expression patterns" value="Expressed in spermatid and 199 other cell types or tissues"/>
</dbReference>
<dbReference type="ExpressionAtlas" id="Q8BGT8">
    <property type="expression patterns" value="baseline and differential"/>
</dbReference>
<dbReference type="GO" id="GO:0005739">
    <property type="term" value="C:mitochondrion"/>
    <property type="evidence" value="ECO:0007005"/>
    <property type="project" value="MGI"/>
</dbReference>
<dbReference type="CDD" id="cd00063">
    <property type="entry name" value="FN3"/>
    <property type="match status" value="1"/>
</dbReference>
<dbReference type="FunFam" id="2.60.40.10:FF:000277">
    <property type="entry name" value="Phytanoyl-CoA hydroxylase-interacting protein-like protein"/>
    <property type="match status" value="1"/>
</dbReference>
<dbReference type="Gene3D" id="2.60.40.10">
    <property type="entry name" value="Immunoglobulins"/>
    <property type="match status" value="1"/>
</dbReference>
<dbReference type="InterPro" id="IPR003961">
    <property type="entry name" value="FN3_dom"/>
</dbReference>
<dbReference type="InterPro" id="IPR036116">
    <property type="entry name" value="FN3_sf"/>
</dbReference>
<dbReference type="InterPro" id="IPR013783">
    <property type="entry name" value="Ig-like_fold"/>
</dbReference>
<dbReference type="InterPro" id="IPR042868">
    <property type="entry name" value="PHYHIP/PHYHIPL"/>
</dbReference>
<dbReference type="InterPro" id="IPR045545">
    <property type="entry name" value="PHYIP/PHIPL_C"/>
</dbReference>
<dbReference type="PANTHER" id="PTHR15698:SF8">
    <property type="entry name" value="PHYTANOYL-COA HYDROXYLASE-INTERACTING PROTEIN-LIKE"/>
    <property type="match status" value="1"/>
</dbReference>
<dbReference type="PANTHER" id="PTHR15698">
    <property type="entry name" value="PROTEIN CBG15099"/>
    <property type="match status" value="1"/>
</dbReference>
<dbReference type="Pfam" id="PF00041">
    <property type="entry name" value="fn3"/>
    <property type="match status" value="1"/>
</dbReference>
<dbReference type="Pfam" id="PF19281">
    <property type="entry name" value="PHYHIP_C"/>
    <property type="match status" value="1"/>
</dbReference>
<dbReference type="SUPFAM" id="SSF49265">
    <property type="entry name" value="Fibronectin type III"/>
    <property type="match status" value="1"/>
</dbReference>
<dbReference type="PROSITE" id="PS50853">
    <property type="entry name" value="FN3"/>
    <property type="match status" value="1"/>
</dbReference>
<reference key="1">
    <citation type="journal article" date="2005" name="Science">
        <title>The transcriptional landscape of the mammalian genome.</title>
        <authorList>
            <person name="Carninci P."/>
            <person name="Kasukawa T."/>
            <person name="Katayama S."/>
            <person name="Gough J."/>
            <person name="Frith M.C."/>
            <person name="Maeda N."/>
            <person name="Oyama R."/>
            <person name="Ravasi T."/>
            <person name="Lenhard B."/>
            <person name="Wells C."/>
            <person name="Kodzius R."/>
            <person name="Shimokawa K."/>
            <person name="Bajic V.B."/>
            <person name="Brenner S.E."/>
            <person name="Batalov S."/>
            <person name="Forrest A.R."/>
            <person name="Zavolan M."/>
            <person name="Davis M.J."/>
            <person name="Wilming L.G."/>
            <person name="Aidinis V."/>
            <person name="Allen J.E."/>
            <person name="Ambesi-Impiombato A."/>
            <person name="Apweiler R."/>
            <person name="Aturaliya R.N."/>
            <person name="Bailey T.L."/>
            <person name="Bansal M."/>
            <person name="Baxter L."/>
            <person name="Beisel K.W."/>
            <person name="Bersano T."/>
            <person name="Bono H."/>
            <person name="Chalk A.M."/>
            <person name="Chiu K.P."/>
            <person name="Choudhary V."/>
            <person name="Christoffels A."/>
            <person name="Clutterbuck D.R."/>
            <person name="Crowe M.L."/>
            <person name="Dalla E."/>
            <person name="Dalrymple B.P."/>
            <person name="de Bono B."/>
            <person name="Della Gatta G."/>
            <person name="di Bernardo D."/>
            <person name="Down T."/>
            <person name="Engstrom P."/>
            <person name="Fagiolini M."/>
            <person name="Faulkner G."/>
            <person name="Fletcher C.F."/>
            <person name="Fukushima T."/>
            <person name="Furuno M."/>
            <person name="Futaki S."/>
            <person name="Gariboldi M."/>
            <person name="Georgii-Hemming P."/>
            <person name="Gingeras T.R."/>
            <person name="Gojobori T."/>
            <person name="Green R.E."/>
            <person name="Gustincich S."/>
            <person name="Harbers M."/>
            <person name="Hayashi Y."/>
            <person name="Hensch T.K."/>
            <person name="Hirokawa N."/>
            <person name="Hill D."/>
            <person name="Huminiecki L."/>
            <person name="Iacono M."/>
            <person name="Ikeo K."/>
            <person name="Iwama A."/>
            <person name="Ishikawa T."/>
            <person name="Jakt M."/>
            <person name="Kanapin A."/>
            <person name="Katoh M."/>
            <person name="Kawasawa Y."/>
            <person name="Kelso J."/>
            <person name="Kitamura H."/>
            <person name="Kitano H."/>
            <person name="Kollias G."/>
            <person name="Krishnan S.P."/>
            <person name="Kruger A."/>
            <person name="Kummerfeld S.K."/>
            <person name="Kurochkin I.V."/>
            <person name="Lareau L.F."/>
            <person name="Lazarevic D."/>
            <person name="Lipovich L."/>
            <person name="Liu J."/>
            <person name="Liuni S."/>
            <person name="McWilliam S."/>
            <person name="Madan Babu M."/>
            <person name="Madera M."/>
            <person name="Marchionni L."/>
            <person name="Matsuda H."/>
            <person name="Matsuzawa S."/>
            <person name="Miki H."/>
            <person name="Mignone F."/>
            <person name="Miyake S."/>
            <person name="Morris K."/>
            <person name="Mottagui-Tabar S."/>
            <person name="Mulder N."/>
            <person name="Nakano N."/>
            <person name="Nakauchi H."/>
            <person name="Ng P."/>
            <person name="Nilsson R."/>
            <person name="Nishiguchi S."/>
            <person name="Nishikawa S."/>
            <person name="Nori F."/>
            <person name="Ohara O."/>
            <person name="Okazaki Y."/>
            <person name="Orlando V."/>
            <person name="Pang K.C."/>
            <person name="Pavan W.J."/>
            <person name="Pavesi G."/>
            <person name="Pesole G."/>
            <person name="Petrovsky N."/>
            <person name="Piazza S."/>
            <person name="Reed J."/>
            <person name="Reid J.F."/>
            <person name="Ring B.Z."/>
            <person name="Ringwald M."/>
            <person name="Rost B."/>
            <person name="Ruan Y."/>
            <person name="Salzberg S.L."/>
            <person name="Sandelin A."/>
            <person name="Schneider C."/>
            <person name="Schoenbach C."/>
            <person name="Sekiguchi K."/>
            <person name="Semple C.A."/>
            <person name="Seno S."/>
            <person name="Sessa L."/>
            <person name="Sheng Y."/>
            <person name="Shibata Y."/>
            <person name="Shimada H."/>
            <person name="Shimada K."/>
            <person name="Silva D."/>
            <person name="Sinclair B."/>
            <person name="Sperling S."/>
            <person name="Stupka E."/>
            <person name="Sugiura K."/>
            <person name="Sultana R."/>
            <person name="Takenaka Y."/>
            <person name="Taki K."/>
            <person name="Tammoja K."/>
            <person name="Tan S.L."/>
            <person name="Tang S."/>
            <person name="Taylor M.S."/>
            <person name="Tegner J."/>
            <person name="Teichmann S.A."/>
            <person name="Ueda H.R."/>
            <person name="van Nimwegen E."/>
            <person name="Verardo R."/>
            <person name="Wei C.L."/>
            <person name="Yagi K."/>
            <person name="Yamanishi H."/>
            <person name="Zabarovsky E."/>
            <person name="Zhu S."/>
            <person name="Zimmer A."/>
            <person name="Hide W."/>
            <person name="Bult C."/>
            <person name="Grimmond S.M."/>
            <person name="Teasdale R.D."/>
            <person name="Liu E.T."/>
            <person name="Brusic V."/>
            <person name="Quackenbush J."/>
            <person name="Wahlestedt C."/>
            <person name="Mattick J.S."/>
            <person name="Hume D.A."/>
            <person name="Kai C."/>
            <person name="Sasaki D."/>
            <person name="Tomaru Y."/>
            <person name="Fukuda S."/>
            <person name="Kanamori-Katayama M."/>
            <person name="Suzuki M."/>
            <person name="Aoki J."/>
            <person name="Arakawa T."/>
            <person name="Iida J."/>
            <person name="Imamura K."/>
            <person name="Itoh M."/>
            <person name="Kato T."/>
            <person name="Kawaji H."/>
            <person name="Kawagashira N."/>
            <person name="Kawashima T."/>
            <person name="Kojima M."/>
            <person name="Kondo S."/>
            <person name="Konno H."/>
            <person name="Nakano K."/>
            <person name="Ninomiya N."/>
            <person name="Nishio T."/>
            <person name="Okada M."/>
            <person name="Plessy C."/>
            <person name="Shibata K."/>
            <person name="Shiraki T."/>
            <person name="Suzuki S."/>
            <person name="Tagami M."/>
            <person name="Waki K."/>
            <person name="Watahiki A."/>
            <person name="Okamura-Oho Y."/>
            <person name="Suzuki H."/>
            <person name="Kawai J."/>
            <person name="Hayashizaki Y."/>
        </authorList>
    </citation>
    <scope>NUCLEOTIDE SEQUENCE [LARGE SCALE MRNA] (ISOFORM 1)</scope>
    <source>
        <strain>C57BL/6J</strain>
        <tissue>Diencephalon</tissue>
        <tissue>Olfactory bulb</tissue>
        <tissue>Spinal cord</tissue>
        <tissue>Testis</tissue>
    </source>
</reference>
<reference key="2">
    <citation type="journal article" date="2004" name="Genome Res.">
        <title>The status, quality, and expansion of the NIH full-length cDNA project: the Mammalian Gene Collection (MGC).</title>
        <authorList>
            <consortium name="The MGC Project Team"/>
        </authorList>
    </citation>
    <scope>NUCLEOTIDE SEQUENCE [LARGE SCALE MRNA] (ISOFORM 1)</scope>
    <scope>NUCLEOTIDE SEQUENCE [LARGE SCALE MRNA] OF 10-375 (ISOFORM 2)</scope>
    <source>
        <tissue>Eye</tissue>
    </source>
</reference>
<reference key="3">
    <citation type="journal article" date="2010" name="Cell">
        <title>A tissue-specific atlas of mouse protein phosphorylation and expression.</title>
        <authorList>
            <person name="Huttlin E.L."/>
            <person name="Jedrychowski M.P."/>
            <person name="Elias J.E."/>
            <person name="Goswami T."/>
            <person name="Rad R."/>
            <person name="Beausoleil S.A."/>
            <person name="Villen J."/>
            <person name="Haas W."/>
            <person name="Sowa M.E."/>
            <person name="Gygi S.P."/>
        </authorList>
    </citation>
    <scope>PHOSPHORYLATION [LARGE SCALE ANALYSIS] AT SER-11; SER-12; SER-15 AND SER-24</scope>
    <scope>IDENTIFICATION BY MASS SPECTROMETRY [LARGE SCALE ANALYSIS]</scope>
    <source>
        <tissue>Brain</tissue>
        <tissue>Kidney</tissue>
        <tissue>Testis</tissue>
    </source>
</reference>
<proteinExistence type="evidence at protein level"/>
<evidence type="ECO:0000250" key="1"/>
<evidence type="ECO:0000255" key="2"/>
<evidence type="ECO:0000255" key="3">
    <source>
        <dbReference type="PROSITE-ProRule" id="PRU00316"/>
    </source>
</evidence>
<evidence type="ECO:0000303" key="4">
    <source>
    </source>
</evidence>
<evidence type="ECO:0000305" key="5"/>
<evidence type="ECO:0007744" key="6">
    <source>
    </source>
</evidence>
<feature type="chain" id="PRO_0000338642" description="Phytanoyl-CoA hydroxylase-interacting protein-like">
    <location>
        <begin position="1"/>
        <end position="375"/>
    </location>
</feature>
<feature type="domain" description="Fibronectin type-III" evidence="3">
    <location>
        <begin position="51"/>
        <end position="160"/>
    </location>
</feature>
<feature type="modified residue" description="Phosphoserine" evidence="6">
    <location>
        <position position="11"/>
    </location>
</feature>
<feature type="modified residue" description="Phosphoserine" evidence="6">
    <location>
        <position position="12"/>
    </location>
</feature>
<feature type="modified residue" description="Phosphoserine" evidence="6">
    <location>
        <position position="15"/>
    </location>
</feature>
<feature type="modified residue" description="Phosphoserine" evidence="6">
    <location>
        <position position="24"/>
    </location>
</feature>
<feature type="glycosylation site" description="N-linked (GlcNAc...) asparagine" evidence="2">
    <location>
        <position position="22"/>
    </location>
</feature>
<feature type="glycosylation site" description="N-linked (GlcNAc...) asparagine" evidence="2">
    <location>
        <position position="36"/>
    </location>
</feature>
<feature type="splice variant" id="VSP_034070" description="In isoform 2." evidence="4">
    <location>
        <begin position="199"/>
        <end position="375"/>
    </location>
</feature>
<feature type="sequence conflict" description="In Ref. 1; BAC26493." evidence="5" ref="1">
    <original>S</original>
    <variation>I</variation>
    <location>
        <position position="15"/>
    </location>
</feature>
<feature type="sequence conflict" description="In Ref. 1; BAC28713." evidence="5" ref="1">
    <original>R</original>
    <variation>H</variation>
    <location>
        <position position="78"/>
    </location>
</feature>
<sequence>MEVPRLDHALSSPSSPCEEIKNLSLEAIQLCDRDGNKSQDSGIAEMEELPVPHNIKINNITCDSFKISWDMDSKSKDRITHYFIDLNKKENKNSNKFKHKDVPTKLVAKAVPLPMTVRGHWFLSPRTEYTVAVQTASKQVDGDYVVSEWSEIIEFCTADYSKVHLTQLLEKADVIAGRMLKFSVFYRNQHKEYFDYVREHYGNAMQPSIKDNSGSHGSPISGKLEGIFFSCSTEFNTGKPPQDSPYGRYRFEIAAEKLFNPNTNLYFGDFYCMYTAYHYVILVIAPVGSPGDEFCKQRLPQLNSKDNNFLTCTEEDGVLVYHHAQDVILEVIYTDPVALSLGTVAEITGHQLMSLSTANAKKDPSCKTCNISVGR</sequence>
<accession>Q8BGT8</accession>
<accession>A4FVA0</accession>
<accession>Q8BZJ1</accession>
<accession>Q8C0X3</accession>
<accession>Q8CFU1</accession>
<accession>Q8R0C1</accession>